<comment type="function">
    <text evidence="1">Catalyzes the NAD(P)-dependent oxidation of 4-(phosphooxy)-L-threonine (HTP) into 2-amino-3-oxo-4-(phosphooxy)butyric acid which spontaneously decarboxylates to form 3-amino-2-oxopropyl phosphate (AHAP).</text>
</comment>
<comment type="catalytic activity">
    <reaction evidence="1">
        <text>4-(phosphooxy)-L-threonine + NAD(+) = 3-amino-2-oxopropyl phosphate + CO2 + NADH</text>
        <dbReference type="Rhea" id="RHEA:32275"/>
        <dbReference type="ChEBI" id="CHEBI:16526"/>
        <dbReference type="ChEBI" id="CHEBI:57279"/>
        <dbReference type="ChEBI" id="CHEBI:57540"/>
        <dbReference type="ChEBI" id="CHEBI:57945"/>
        <dbReference type="ChEBI" id="CHEBI:58452"/>
        <dbReference type="EC" id="1.1.1.262"/>
    </reaction>
</comment>
<comment type="cofactor">
    <cofactor evidence="1 2">
        <name>Zn(2+)</name>
        <dbReference type="ChEBI" id="CHEBI:29105"/>
    </cofactor>
    <cofactor evidence="1 2">
        <name>Mg(2+)</name>
        <dbReference type="ChEBI" id="CHEBI:18420"/>
    </cofactor>
    <cofactor evidence="1 2">
        <name>Co(2+)</name>
        <dbReference type="ChEBI" id="CHEBI:48828"/>
    </cofactor>
    <text evidence="1 2">Binds 1 divalent metal cation per subunit. Can probably use ions such as Zn(2+), Mg(2+) or Co(2+).</text>
</comment>
<comment type="pathway">
    <text evidence="1">Cofactor biosynthesis; pyridoxine 5'-phosphate biosynthesis; pyridoxine 5'-phosphate from D-erythrose 4-phosphate: step 4/5.</text>
</comment>
<comment type="subunit">
    <text evidence="1 2">Homodimer.</text>
</comment>
<comment type="subcellular location">
    <subcellularLocation>
        <location evidence="1">Cytoplasm</location>
    </subcellularLocation>
</comment>
<comment type="miscellaneous">
    <text evidence="1">The active site is located at the dimer interface.</text>
</comment>
<comment type="similarity">
    <text evidence="1">Belongs to the PdxA family.</text>
</comment>
<gene>
    <name evidence="1" type="primary">pdxA</name>
    <name type="ordered locus">PA0593</name>
</gene>
<dbReference type="EC" id="1.1.1.262" evidence="1"/>
<dbReference type="EMBL" id="AE004091">
    <property type="protein sequence ID" value="AAG03982.1"/>
    <property type="molecule type" value="Genomic_DNA"/>
</dbReference>
<dbReference type="PIR" id="A83572">
    <property type="entry name" value="A83572"/>
</dbReference>
<dbReference type="RefSeq" id="NP_249284.1">
    <property type="nucleotide sequence ID" value="NC_002516.2"/>
</dbReference>
<dbReference type="RefSeq" id="WP_003109023.1">
    <property type="nucleotide sequence ID" value="NZ_QZGE01000010.1"/>
</dbReference>
<dbReference type="PDB" id="1YXO">
    <property type="method" value="X-ray"/>
    <property type="resolution" value="2.01 A"/>
    <property type="chains" value="A/B=1-328"/>
</dbReference>
<dbReference type="PDBsum" id="1YXO"/>
<dbReference type="SMR" id="Q9I5U4"/>
<dbReference type="FunCoup" id="Q9I5U4">
    <property type="interactions" value="375"/>
</dbReference>
<dbReference type="STRING" id="208964.PA0593"/>
<dbReference type="PaxDb" id="208964-PA0593"/>
<dbReference type="GeneID" id="880733"/>
<dbReference type="KEGG" id="pae:PA0593"/>
<dbReference type="PATRIC" id="fig|208964.12.peg.629"/>
<dbReference type="PseudoCAP" id="PA0593"/>
<dbReference type="HOGENOM" id="CLU_040168_2_0_6"/>
<dbReference type="InParanoid" id="Q9I5U4"/>
<dbReference type="OrthoDB" id="9801783at2"/>
<dbReference type="PhylomeDB" id="Q9I5U4"/>
<dbReference type="BioCyc" id="PAER208964:G1FZ6-600-MONOMER"/>
<dbReference type="UniPathway" id="UPA00244">
    <property type="reaction ID" value="UER00312"/>
</dbReference>
<dbReference type="EvolutionaryTrace" id="Q9I5U4"/>
<dbReference type="Proteomes" id="UP000002438">
    <property type="component" value="Chromosome"/>
</dbReference>
<dbReference type="GO" id="GO:0005737">
    <property type="term" value="C:cytoplasm"/>
    <property type="evidence" value="ECO:0007669"/>
    <property type="project" value="UniProtKB-SubCell"/>
</dbReference>
<dbReference type="GO" id="GO:0050570">
    <property type="term" value="F:4-hydroxythreonine-4-phosphate dehydrogenase activity"/>
    <property type="evidence" value="ECO:0000318"/>
    <property type="project" value="GO_Central"/>
</dbReference>
<dbReference type="GO" id="GO:0050897">
    <property type="term" value="F:cobalt ion binding"/>
    <property type="evidence" value="ECO:0007669"/>
    <property type="project" value="UniProtKB-UniRule"/>
</dbReference>
<dbReference type="GO" id="GO:0000287">
    <property type="term" value="F:magnesium ion binding"/>
    <property type="evidence" value="ECO:0007669"/>
    <property type="project" value="UniProtKB-UniRule"/>
</dbReference>
<dbReference type="GO" id="GO:0051287">
    <property type="term" value="F:NAD binding"/>
    <property type="evidence" value="ECO:0007669"/>
    <property type="project" value="InterPro"/>
</dbReference>
<dbReference type="GO" id="GO:0008270">
    <property type="term" value="F:zinc ion binding"/>
    <property type="evidence" value="ECO:0007669"/>
    <property type="project" value="UniProtKB-UniRule"/>
</dbReference>
<dbReference type="GO" id="GO:0042823">
    <property type="term" value="P:pyridoxal phosphate biosynthetic process"/>
    <property type="evidence" value="ECO:0000318"/>
    <property type="project" value="GO_Central"/>
</dbReference>
<dbReference type="GO" id="GO:0008615">
    <property type="term" value="P:pyridoxine biosynthetic process"/>
    <property type="evidence" value="ECO:0000318"/>
    <property type="project" value="GO_Central"/>
</dbReference>
<dbReference type="Gene3D" id="3.40.718.10">
    <property type="entry name" value="Isopropylmalate Dehydrogenase"/>
    <property type="match status" value="1"/>
</dbReference>
<dbReference type="HAMAP" id="MF_00536">
    <property type="entry name" value="PdxA"/>
    <property type="match status" value="1"/>
</dbReference>
<dbReference type="InterPro" id="IPR037510">
    <property type="entry name" value="PdxA"/>
</dbReference>
<dbReference type="InterPro" id="IPR005255">
    <property type="entry name" value="PdxA_fam"/>
</dbReference>
<dbReference type="NCBIfam" id="TIGR00557">
    <property type="entry name" value="pdxA"/>
    <property type="match status" value="1"/>
</dbReference>
<dbReference type="PANTHER" id="PTHR30004">
    <property type="entry name" value="4-HYDROXYTHREONINE-4-PHOSPHATE DEHYDROGENASE"/>
    <property type="match status" value="1"/>
</dbReference>
<dbReference type="PANTHER" id="PTHR30004:SF5">
    <property type="entry name" value="4-HYDROXYTHREONINE-4-PHOSPHATE DEHYDROGENASE"/>
    <property type="match status" value="1"/>
</dbReference>
<dbReference type="Pfam" id="PF04166">
    <property type="entry name" value="PdxA"/>
    <property type="match status" value="1"/>
</dbReference>
<dbReference type="SUPFAM" id="SSF53659">
    <property type="entry name" value="Isocitrate/Isopropylmalate dehydrogenase-like"/>
    <property type="match status" value="1"/>
</dbReference>
<accession>Q9I5U4</accession>
<name>PDXA_PSEAE</name>
<proteinExistence type="evidence at protein level"/>
<protein>
    <recommendedName>
        <fullName evidence="1">4-hydroxythreonine-4-phosphate dehydrogenase</fullName>
        <ecNumber evidence="1">1.1.1.262</ecNumber>
    </recommendedName>
    <alternativeName>
        <fullName evidence="1">4-(phosphohydroxy)-L-threonine dehydrogenase</fullName>
    </alternativeName>
</protein>
<keyword id="KW-0002">3D-structure</keyword>
<keyword id="KW-0170">Cobalt</keyword>
<keyword id="KW-0963">Cytoplasm</keyword>
<keyword id="KW-0460">Magnesium</keyword>
<keyword id="KW-0479">Metal-binding</keyword>
<keyword id="KW-0520">NAD</keyword>
<keyword id="KW-0521">NADP</keyword>
<keyword id="KW-0560">Oxidoreductase</keyword>
<keyword id="KW-0664">Pyridoxine biosynthesis</keyword>
<keyword id="KW-1185">Reference proteome</keyword>
<keyword id="KW-0862">Zinc</keyword>
<reference key="1">
    <citation type="journal article" date="2000" name="Nature">
        <title>Complete genome sequence of Pseudomonas aeruginosa PAO1, an opportunistic pathogen.</title>
        <authorList>
            <person name="Stover C.K."/>
            <person name="Pham X.-Q.T."/>
            <person name="Erwin A.L."/>
            <person name="Mizoguchi S.D."/>
            <person name="Warrener P."/>
            <person name="Hickey M.J."/>
            <person name="Brinkman F.S.L."/>
            <person name="Hufnagle W.O."/>
            <person name="Kowalik D.J."/>
            <person name="Lagrou M."/>
            <person name="Garber R.L."/>
            <person name="Goltry L."/>
            <person name="Tolentino E."/>
            <person name="Westbrock-Wadman S."/>
            <person name="Yuan Y."/>
            <person name="Brody L.L."/>
            <person name="Coulter S.N."/>
            <person name="Folger K.R."/>
            <person name="Kas A."/>
            <person name="Larbig K."/>
            <person name="Lim R.M."/>
            <person name="Smith K.A."/>
            <person name="Spencer D.H."/>
            <person name="Wong G.K.-S."/>
            <person name="Wu Z."/>
            <person name="Paulsen I.T."/>
            <person name="Reizer J."/>
            <person name="Saier M.H. Jr."/>
            <person name="Hancock R.E.W."/>
            <person name="Lory S."/>
            <person name="Olson M.V."/>
        </authorList>
    </citation>
    <scope>NUCLEOTIDE SEQUENCE [LARGE SCALE GENOMIC DNA]</scope>
    <source>
        <strain>ATCC 15692 / DSM 22644 / CIP 104116 / JCM 14847 / LMG 12228 / 1C / PRS 101 / PAO1</strain>
    </source>
</reference>
<reference key="2">
    <citation type="submission" date="2005-04" db="PDB data bank">
        <title>Crystal structure of pyridoxal phosphate biosynthetic protein pdxA PA0593.</title>
        <authorList>
            <consortium name="Midwest center for structural genomics (MCSG)"/>
        </authorList>
    </citation>
    <scope>X-RAY CRYSTALLOGRAPHY (2.01 ANGSTROMS) IN COMPLEX WITH MAGNESIUM IONS</scope>
    <scope>COFACTOR</scope>
    <scope>SUBUNIT</scope>
</reference>
<evidence type="ECO:0000255" key="1">
    <source>
        <dbReference type="HAMAP-Rule" id="MF_00536"/>
    </source>
</evidence>
<evidence type="ECO:0000269" key="2">
    <source ref="2"/>
</evidence>
<evidence type="ECO:0007829" key="3">
    <source>
        <dbReference type="PDB" id="1YXO"/>
    </source>
</evidence>
<sequence>MSLRFALTPGEPAGIGPDLCLLLARSAQPHPLIAIASRTLLQERAGQLGLAIDLKDVSPAAWPERPAKAGQLYVWDTPLAAPVRPGQLDRANAAYVLETLTRAGQGCLDGHFAGMITAPVHKGVINEAGIPFSGHTEFLADLTHTAQVVMMLATRGLRVALATTHLPLREVADAISDERLTRVARILHADLRDKFGIAHPRILVCGLNPHAGEGGHLGREEIEVIEPCLERLRGEGLDLIGPLPADTLFTPKHLEHCDAVLAMYHDQGLPVLKYKGFGAAVNVTLGLPIIRTSVDHGTALDLAGSGRIDSGSLQVALETAYQMAASRC</sequence>
<feature type="chain" id="PRO_0000188815" description="4-hydroxythreonine-4-phosphate dehydrogenase">
    <location>
        <begin position="1"/>
        <end position="328"/>
    </location>
</feature>
<feature type="binding site" evidence="1">
    <location>
        <position position="135"/>
    </location>
    <ligand>
        <name>substrate</name>
    </ligand>
</feature>
<feature type="binding site" evidence="1">
    <location>
        <position position="136"/>
    </location>
    <ligand>
        <name>substrate</name>
    </ligand>
</feature>
<feature type="binding site" evidence="1">
    <location>
        <position position="165"/>
    </location>
    <ligand>
        <name>a divalent metal cation</name>
        <dbReference type="ChEBI" id="CHEBI:60240"/>
        <note>ligand shared between dimeric partners</note>
    </ligand>
</feature>
<feature type="binding site" evidence="1">
    <location>
        <position position="210"/>
    </location>
    <ligand>
        <name>a divalent metal cation</name>
        <dbReference type="ChEBI" id="CHEBI:60240"/>
        <note>ligand shared between dimeric partners</note>
    </ligand>
</feature>
<feature type="binding site" evidence="1">
    <location>
        <position position="265"/>
    </location>
    <ligand>
        <name>a divalent metal cation</name>
        <dbReference type="ChEBI" id="CHEBI:60240"/>
        <note>ligand shared between dimeric partners</note>
    </ligand>
</feature>
<feature type="binding site" evidence="1">
    <location>
        <position position="273"/>
    </location>
    <ligand>
        <name>substrate</name>
    </ligand>
</feature>
<feature type="binding site" evidence="1">
    <location>
        <position position="282"/>
    </location>
    <ligand>
        <name>substrate</name>
    </ligand>
</feature>
<feature type="binding site" evidence="1">
    <location>
        <position position="291"/>
    </location>
    <ligand>
        <name>substrate</name>
    </ligand>
</feature>
<feature type="strand" evidence="3">
    <location>
        <begin position="5"/>
        <end position="8"/>
    </location>
</feature>
<feature type="helix" evidence="3">
    <location>
        <begin position="16"/>
        <end position="23"/>
    </location>
</feature>
<feature type="strand" evidence="3">
    <location>
        <begin position="32"/>
        <end position="36"/>
    </location>
</feature>
<feature type="helix" evidence="3">
    <location>
        <begin position="38"/>
        <end position="48"/>
    </location>
</feature>
<feature type="strand" evidence="3">
    <location>
        <begin position="53"/>
        <end position="56"/>
    </location>
</feature>
<feature type="strand" evidence="3">
    <location>
        <begin position="71"/>
        <end position="76"/>
    </location>
</feature>
<feature type="helix" evidence="3">
    <location>
        <begin position="90"/>
        <end position="92"/>
    </location>
</feature>
<feature type="helix" evidence="3">
    <location>
        <begin position="93"/>
        <end position="108"/>
    </location>
</feature>
<feature type="strand" evidence="3">
    <location>
        <begin position="113"/>
        <end position="117"/>
    </location>
</feature>
<feature type="helix" evidence="3">
    <location>
        <begin position="122"/>
        <end position="127"/>
    </location>
</feature>
<feature type="helix" evidence="3">
    <location>
        <begin position="135"/>
        <end position="142"/>
    </location>
</feature>
<feature type="strand" evidence="3">
    <location>
        <begin position="149"/>
        <end position="154"/>
    </location>
</feature>
<feature type="strand" evidence="3">
    <location>
        <begin position="157"/>
        <end position="163"/>
    </location>
</feature>
<feature type="helix" evidence="3">
    <location>
        <begin position="168"/>
        <end position="170"/>
    </location>
</feature>
<feature type="helix" evidence="3">
    <location>
        <begin position="171"/>
        <end position="174"/>
    </location>
</feature>
<feature type="helix" evidence="3">
    <location>
        <begin position="177"/>
        <end position="193"/>
    </location>
</feature>
<feature type="strand" evidence="3">
    <location>
        <begin position="201"/>
        <end position="205"/>
    </location>
</feature>
<feature type="helix" evidence="3">
    <location>
        <begin position="209"/>
        <end position="212"/>
    </location>
</feature>
<feature type="turn" evidence="3">
    <location>
        <begin position="213"/>
        <end position="217"/>
    </location>
</feature>
<feature type="helix" evidence="3">
    <location>
        <begin position="220"/>
        <end position="223"/>
    </location>
</feature>
<feature type="helix" evidence="3">
    <location>
        <begin position="225"/>
        <end position="233"/>
    </location>
</feature>
<feature type="turn" evidence="3">
    <location>
        <begin position="234"/>
        <end position="236"/>
    </location>
</feature>
<feature type="strand" evidence="3">
    <location>
        <begin position="238"/>
        <end position="243"/>
    </location>
</feature>
<feature type="helix" evidence="3">
    <location>
        <begin position="245"/>
        <end position="248"/>
    </location>
</feature>
<feature type="helix" evidence="3">
    <location>
        <begin position="251"/>
        <end position="254"/>
    </location>
</feature>
<feature type="strand" evidence="3">
    <location>
        <begin position="258"/>
        <end position="264"/>
    </location>
</feature>
<feature type="helix" evidence="3">
    <location>
        <begin position="265"/>
        <end position="276"/>
    </location>
</feature>
<feature type="strand" evidence="3">
    <location>
        <begin position="281"/>
        <end position="289"/>
    </location>
</feature>
<feature type="strand" evidence="3">
    <location>
        <begin position="291"/>
        <end position="294"/>
    </location>
</feature>
<feature type="helix" evidence="3">
    <location>
        <begin position="300"/>
        <end position="302"/>
    </location>
</feature>
<feature type="turn" evidence="3">
    <location>
        <begin position="303"/>
        <end position="305"/>
    </location>
</feature>
<feature type="helix" evidence="3">
    <location>
        <begin position="311"/>
        <end position="326"/>
    </location>
</feature>
<organism>
    <name type="scientific">Pseudomonas aeruginosa (strain ATCC 15692 / DSM 22644 / CIP 104116 / JCM 14847 / LMG 12228 / 1C / PRS 101 / PAO1)</name>
    <dbReference type="NCBI Taxonomy" id="208964"/>
    <lineage>
        <taxon>Bacteria</taxon>
        <taxon>Pseudomonadati</taxon>
        <taxon>Pseudomonadota</taxon>
        <taxon>Gammaproteobacteria</taxon>
        <taxon>Pseudomonadales</taxon>
        <taxon>Pseudomonadaceae</taxon>
        <taxon>Pseudomonas</taxon>
    </lineage>
</organism>